<dbReference type="EMBL" id="BC091205">
    <property type="protein sequence ID" value="AAH91205.1"/>
    <property type="molecule type" value="mRNA"/>
</dbReference>
<dbReference type="EMBL" id="BC091216">
    <property type="protein sequence ID" value="AAH91216.1"/>
    <property type="molecule type" value="mRNA"/>
</dbReference>
<dbReference type="RefSeq" id="NP_001020172.1">
    <property type="nucleotide sequence ID" value="NM_001025001.1"/>
</dbReference>
<dbReference type="RefSeq" id="XP_006230327.1">
    <property type="nucleotide sequence ID" value="XM_006230265.4"/>
</dbReference>
<dbReference type="RefSeq" id="XP_006230328.1">
    <property type="nucleotide sequence ID" value="XM_006230266.5"/>
</dbReference>
<dbReference type="RefSeq" id="XP_006230329.1">
    <property type="nucleotide sequence ID" value="XM_006230267.4"/>
</dbReference>
<dbReference type="RefSeq" id="XP_006230330.1">
    <property type="nucleotide sequence ID" value="XM_006230268.5"/>
</dbReference>
<dbReference type="SMR" id="Q5BK39"/>
<dbReference type="FunCoup" id="Q5BK39">
    <property type="interactions" value="167"/>
</dbReference>
<dbReference type="STRING" id="10116.ENSRNOP00000022765"/>
<dbReference type="GlyGen" id="Q5BK39">
    <property type="glycosylation" value="2 sites"/>
</dbReference>
<dbReference type="iPTMnet" id="Q5BK39"/>
<dbReference type="PhosphoSitePlus" id="Q5BK39"/>
<dbReference type="PaxDb" id="10116-ENSRNOP00000022765"/>
<dbReference type="Ensembl" id="ENSRNOT00000022765.6">
    <property type="protein sequence ID" value="ENSRNOP00000022765.3"/>
    <property type="gene ID" value="ENSRNOG00000016978.6"/>
</dbReference>
<dbReference type="Ensembl" id="ENSRNOT00000107053.1">
    <property type="protein sequence ID" value="ENSRNOP00000084151.1"/>
    <property type="gene ID" value="ENSRNOG00000016978.6"/>
</dbReference>
<dbReference type="GeneID" id="308990"/>
<dbReference type="KEGG" id="rno:308990"/>
<dbReference type="UCSC" id="RGD:1564503">
    <property type="organism name" value="rat"/>
</dbReference>
<dbReference type="AGR" id="RGD:1564503"/>
<dbReference type="CTD" id="308990"/>
<dbReference type="RGD" id="1564503">
    <property type="gene designation" value="C1h16orf54"/>
</dbReference>
<dbReference type="eggNOG" id="ENOG502SP19">
    <property type="taxonomic scope" value="Eukaryota"/>
</dbReference>
<dbReference type="GeneTree" id="ENSGT00390000014957"/>
<dbReference type="HOGENOM" id="CLU_1224436_0_0_1"/>
<dbReference type="InParanoid" id="Q5BK39"/>
<dbReference type="OMA" id="SWPPLPC"/>
<dbReference type="OrthoDB" id="9834691at2759"/>
<dbReference type="PhylomeDB" id="Q5BK39"/>
<dbReference type="TreeFam" id="TF337660"/>
<dbReference type="PRO" id="PR:Q5BK39"/>
<dbReference type="Proteomes" id="UP000002494">
    <property type="component" value="Chromosome 1"/>
</dbReference>
<dbReference type="Bgee" id="ENSRNOG00000016978">
    <property type="expression patterns" value="Expressed in thymus and 18 other cell types or tissues"/>
</dbReference>
<dbReference type="GO" id="GO:0016020">
    <property type="term" value="C:membrane"/>
    <property type="evidence" value="ECO:0007669"/>
    <property type="project" value="UniProtKB-SubCell"/>
</dbReference>
<dbReference type="InterPro" id="IPR031499">
    <property type="entry name" value="DUF4689"/>
</dbReference>
<dbReference type="PANTHER" id="PTHR36134">
    <property type="entry name" value="TRANSMEMBRANE PROTEIN C16ORF54"/>
    <property type="match status" value="1"/>
</dbReference>
<dbReference type="PANTHER" id="PTHR36134:SF1">
    <property type="entry name" value="TRANSMEMBRANE PROTEIN C16ORF54"/>
    <property type="match status" value="1"/>
</dbReference>
<dbReference type="Pfam" id="PF15755">
    <property type="entry name" value="DUF4689"/>
    <property type="match status" value="1"/>
</dbReference>
<protein>
    <recommendedName>
        <fullName>Transmembrane protein C16orf54 homolog</fullName>
    </recommendedName>
</protein>
<accession>Q5BK39</accession>
<reference key="1">
    <citation type="journal article" date="2004" name="Genome Res.">
        <title>The status, quality, and expansion of the NIH full-length cDNA project: the Mammalian Gene Collection (MGC).</title>
        <authorList>
            <consortium name="The MGC Project Team"/>
        </authorList>
    </citation>
    <scope>NUCLEOTIDE SEQUENCE [LARGE SCALE MRNA]</scope>
    <source>
        <tissue>Thymus</tissue>
    </source>
</reference>
<reference key="2">
    <citation type="journal article" date="2012" name="Nat. Commun.">
        <title>Quantitative maps of protein phosphorylation sites across 14 different rat organs and tissues.</title>
        <authorList>
            <person name="Lundby A."/>
            <person name="Secher A."/>
            <person name="Lage K."/>
            <person name="Nordsborg N.B."/>
            <person name="Dmytriyev A."/>
            <person name="Lundby C."/>
            <person name="Olsen J.V."/>
        </authorList>
    </citation>
    <scope>PHOSPHORYLATION [LARGE SCALE ANALYSIS] AT THR-113; THR-117 AND SER-195</scope>
    <scope>IDENTIFICATION BY MASS SPECTROMETRY [LARGE SCALE ANALYSIS]</scope>
</reference>
<organism>
    <name type="scientific">Rattus norvegicus</name>
    <name type="common">Rat</name>
    <dbReference type="NCBI Taxonomy" id="10116"/>
    <lineage>
        <taxon>Eukaryota</taxon>
        <taxon>Metazoa</taxon>
        <taxon>Chordata</taxon>
        <taxon>Craniata</taxon>
        <taxon>Vertebrata</taxon>
        <taxon>Euteleostomi</taxon>
        <taxon>Mammalia</taxon>
        <taxon>Eutheria</taxon>
        <taxon>Euarchontoglires</taxon>
        <taxon>Glires</taxon>
        <taxon>Rodentia</taxon>
        <taxon>Myomorpha</taxon>
        <taxon>Muroidea</taxon>
        <taxon>Muridae</taxon>
        <taxon>Murinae</taxon>
        <taxon>Rattus</taxon>
    </lineage>
</organism>
<sequence>MPATPQQPSGHTEGLTEPTSEAAMWVVIPCGPCIPIMLGLASLTAFFIITTAVLAERLFRRPQPDPSQRAPTLVWRPGGELWIEPTSSARERSEDWYGSSIPLLMDRAPDPPTPGGTLEGRATAPPAIPTPHPSPSSLVPQTPPEVPAQSTFWRPQTQEESPYATGLVSWVGPEPMAEAGLEVGSPRAWRLRQGSLEPDWSLQPRVTLEQISAFWKREGRTSVGF</sequence>
<proteinExistence type="evidence at protein level"/>
<name>CP054_RAT</name>
<keyword id="KW-0472">Membrane</keyword>
<keyword id="KW-0597">Phosphoprotein</keyword>
<keyword id="KW-1185">Reference proteome</keyword>
<keyword id="KW-0812">Transmembrane</keyword>
<keyword id="KW-1133">Transmembrane helix</keyword>
<feature type="chain" id="PRO_0000279444" description="Transmembrane protein C16orf54 homolog">
    <location>
        <begin position="1"/>
        <end position="225"/>
    </location>
</feature>
<feature type="transmembrane region" description="Helical" evidence="1">
    <location>
        <begin position="34"/>
        <end position="54"/>
    </location>
</feature>
<feature type="region of interest" description="Disordered" evidence="2">
    <location>
        <begin position="107"/>
        <end position="149"/>
    </location>
</feature>
<feature type="modified residue" description="Phosphothreonine" evidence="4">
    <location>
        <position position="113"/>
    </location>
</feature>
<feature type="modified residue" description="Phosphothreonine" evidence="4">
    <location>
        <position position="117"/>
    </location>
</feature>
<feature type="modified residue" description="Phosphoserine" evidence="4">
    <location>
        <position position="195"/>
    </location>
</feature>
<comment type="subcellular location">
    <subcellularLocation>
        <location evidence="3">Membrane</location>
        <topology evidence="3">Single-pass membrane protein</topology>
    </subcellularLocation>
</comment>
<evidence type="ECO:0000255" key="1"/>
<evidence type="ECO:0000256" key="2">
    <source>
        <dbReference type="SAM" id="MobiDB-lite"/>
    </source>
</evidence>
<evidence type="ECO:0000305" key="3"/>
<evidence type="ECO:0007744" key="4">
    <source>
    </source>
</evidence>